<accession>Q6NLW5</accession>
<accession>Q9FKC4</accession>
<comment type="function">
    <text evidence="2">Required for mitotic division of the generative cell nucleus and the development of mature tricellular pollen grains, and for male and female meiosis.</text>
</comment>
<comment type="subunit">
    <text evidence="2">Interacts (via C-terminal domain) with MIP1.</text>
</comment>
<comment type="interaction">
    <interactant intactId="EBI-2270660">
        <id>Q6NLW5</id>
    </interactant>
    <interactant intactId="EBI-2270543">
        <id>Q8RX22</id>
        <label>MIP1</label>
    </interactant>
    <organismsDiffer>false</organismsDiffer>
    <experiments>2</experiments>
</comment>
<comment type="subcellular location">
    <subcellularLocation>
        <location evidence="2">Nucleus</location>
    </subcellularLocation>
</comment>
<comment type="alternative products">
    <event type="alternative splicing"/>
    <isoform>
        <id>Q6NLW5-1</id>
        <name>1</name>
        <sequence type="displayed"/>
    </isoform>
    <isoform>
        <id>Q6NLW5-2</id>
        <name>2</name>
        <sequence type="described" ref="VSP_037542"/>
    </isoform>
</comment>
<comment type="induction">
    <text evidence="1 2">By X-rays and bleomycin treatment.</text>
</comment>
<comment type="disruption phenotype">
    <text evidence="2">Complete sterility.</text>
</comment>
<comment type="miscellaneous">
    <text>The induction by X-rays is dependent on DNA damage signaling by ATM.</text>
</comment>
<comment type="sequence caution" evidence="4">
    <conflict type="erroneous gene model prediction">
        <sequence resource="EMBL-CDS" id="BAB09425"/>
    </conflict>
</comment>
<protein>
    <recommendedName>
        <fullName>Protein XRI1</fullName>
    </recommendedName>
    <alternativeName>
        <fullName>Protein X-RAY INDUCED 1</fullName>
    </alternativeName>
</protein>
<gene>
    <name type="primary">XRI1</name>
    <name type="ordered locus">At5g48720</name>
    <name type="ORF">K24G6.5</name>
</gene>
<name>XRI1_ARATH</name>
<dbReference type="EMBL" id="AB012242">
    <property type="protein sequence ID" value="BAB09425.1"/>
    <property type="status" value="ALT_SEQ"/>
    <property type="molecule type" value="Genomic_DNA"/>
</dbReference>
<dbReference type="EMBL" id="CP002688">
    <property type="protein sequence ID" value="AED95715.1"/>
    <property type="molecule type" value="Genomic_DNA"/>
</dbReference>
<dbReference type="EMBL" id="CP002688">
    <property type="protein sequence ID" value="AED95716.1"/>
    <property type="molecule type" value="Genomic_DNA"/>
</dbReference>
<dbReference type="EMBL" id="CP002688">
    <property type="protein sequence ID" value="ANM68399.1"/>
    <property type="molecule type" value="Genomic_DNA"/>
</dbReference>
<dbReference type="EMBL" id="CP002688">
    <property type="protein sequence ID" value="ANM68400.1"/>
    <property type="molecule type" value="Genomic_DNA"/>
</dbReference>
<dbReference type="EMBL" id="BT012214">
    <property type="protein sequence ID" value="AAS76701.1"/>
    <property type="molecule type" value="mRNA"/>
</dbReference>
<dbReference type="EMBL" id="BT020567">
    <property type="protein sequence ID" value="AAW78586.1"/>
    <property type="molecule type" value="mRNA"/>
</dbReference>
<dbReference type="RefSeq" id="NP_001154770.1">
    <molecule id="Q6NLW5-1"/>
    <property type="nucleotide sequence ID" value="NM_001161298.2"/>
</dbReference>
<dbReference type="RefSeq" id="NP_001330159.1">
    <molecule id="Q6NLW5-2"/>
    <property type="nucleotide sequence ID" value="NM_001344803.1"/>
</dbReference>
<dbReference type="RefSeq" id="NP_001330160.1">
    <molecule id="Q6NLW5-1"/>
    <property type="nucleotide sequence ID" value="NM_001344804.1"/>
</dbReference>
<dbReference type="RefSeq" id="NP_199683.2">
    <molecule id="Q6NLW5-2"/>
    <property type="nucleotide sequence ID" value="NM_124249.3"/>
</dbReference>
<dbReference type="BioGRID" id="20176">
    <property type="interactions" value="1"/>
</dbReference>
<dbReference type="FunCoup" id="Q6NLW5">
    <property type="interactions" value="1245"/>
</dbReference>
<dbReference type="IntAct" id="Q6NLW5">
    <property type="interactions" value="1"/>
</dbReference>
<dbReference type="STRING" id="3702.Q6NLW5"/>
<dbReference type="PaxDb" id="3702-AT5G48720.2"/>
<dbReference type="ProteomicsDB" id="242797">
    <molecule id="Q6NLW5-1"/>
</dbReference>
<dbReference type="EnsemblPlants" id="AT5G48720.1">
    <molecule id="Q6NLW5-2"/>
    <property type="protein sequence ID" value="AT5G48720.1"/>
    <property type="gene ID" value="AT5G48720"/>
</dbReference>
<dbReference type="EnsemblPlants" id="AT5G48720.2">
    <molecule id="Q6NLW5-1"/>
    <property type="protein sequence ID" value="AT5G48720.2"/>
    <property type="gene ID" value="AT5G48720"/>
</dbReference>
<dbReference type="EnsemblPlants" id="AT5G48720.3">
    <molecule id="Q6NLW5-2"/>
    <property type="protein sequence ID" value="AT5G48720.3"/>
    <property type="gene ID" value="AT5G48720"/>
</dbReference>
<dbReference type="EnsemblPlants" id="AT5G48720.4">
    <molecule id="Q6NLW5-1"/>
    <property type="protein sequence ID" value="AT5G48720.4"/>
    <property type="gene ID" value="AT5G48720"/>
</dbReference>
<dbReference type="GeneID" id="834930"/>
<dbReference type="Gramene" id="AT5G48720.1">
    <molecule id="Q6NLW5-2"/>
    <property type="protein sequence ID" value="AT5G48720.1"/>
    <property type="gene ID" value="AT5G48720"/>
</dbReference>
<dbReference type="Gramene" id="AT5G48720.2">
    <molecule id="Q6NLW5-1"/>
    <property type="protein sequence ID" value="AT5G48720.2"/>
    <property type="gene ID" value="AT5G48720"/>
</dbReference>
<dbReference type="Gramene" id="AT5G48720.3">
    <molecule id="Q6NLW5-2"/>
    <property type="protein sequence ID" value="AT5G48720.3"/>
    <property type="gene ID" value="AT5G48720"/>
</dbReference>
<dbReference type="Gramene" id="AT5G48720.4">
    <molecule id="Q6NLW5-1"/>
    <property type="protein sequence ID" value="AT5G48720.4"/>
    <property type="gene ID" value="AT5G48720"/>
</dbReference>
<dbReference type="KEGG" id="ath:AT5G48720"/>
<dbReference type="Araport" id="AT5G48720"/>
<dbReference type="TAIR" id="AT5G48720">
    <property type="gene designation" value="XRI1"/>
</dbReference>
<dbReference type="eggNOG" id="ENOG502QTT2">
    <property type="taxonomic scope" value="Eukaryota"/>
</dbReference>
<dbReference type="InParanoid" id="Q6NLW5"/>
<dbReference type="OMA" id="QSQEYDL"/>
<dbReference type="OrthoDB" id="1913204at2759"/>
<dbReference type="PhylomeDB" id="Q6NLW5"/>
<dbReference type="PRO" id="PR:Q6NLW5"/>
<dbReference type="Proteomes" id="UP000006548">
    <property type="component" value="Chromosome 5"/>
</dbReference>
<dbReference type="ExpressionAtlas" id="Q6NLW5">
    <property type="expression patterns" value="baseline and differential"/>
</dbReference>
<dbReference type="GO" id="GO:0005634">
    <property type="term" value="C:nucleus"/>
    <property type="evidence" value="ECO:0000314"/>
    <property type="project" value="TAIR"/>
</dbReference>
<dbReference type="GO" id="GO:0006281">
    <property type="term" value="P:DNA repair"/>
    <property type="evidence" value="ECO:0000315"/>
    <property type="project" value="TAIR"/>
</dbReference>
<dbReference type="GO" id="GO:0007143">
    <property type="term" value="P:female meiotic nuclear division"/>
    <property type="evidence" value="ECO:0000315"/>
    <property type="project" value="TAIR"/>
</dbReference>
<dbReference type="GO" id="GO:0007140">
    <property type="term" value="P:male meiotic nuclear division"/>
    <property type="evidence" value="ECO:0000315"/>
    <property type="project" value="TAIR"/>
</dbReference>
<dbReference type="GO" id="GO:0009555">
    <property type="term" value="P:pollen development"/>
    <property type="evidence" value="ECO:0000315"/>
    <property type="project" value="TAIR"/>
</dbReference>
<dbReference type="GO" id="GO:0010165">
    <property type="term" value="P:response to X-ray"/>
    <property type="evidence" value="ECO:0000270"/>
    <property type="project" value="TAIR"/>
</dbReference>
<dbReference type="InterPro" id="IPR039933">
    <property type="entry name" value="XRI1"/>
</dbReference>
<dbReference type="PANTHER" id="PTHR33385">
    <property type="entry name" value="PROTEIN XRI1"/>
    <property type="match status" value="1"/>
</dbReference>
<dbReference type="PANTHER" id="PTHR33385:SF4">
    <property type="entry name" value="PROTEIN XRI1"/>
    <property type="match status" value="1"/>
</dbReference>
<reference key="1">
    <citation type="journal article" date="2009" name="Plant J.">
        <title>A novel ATM dependant X-ray inducible gene is essential for both plant meiosis and gametogenesis.</title>
        <authorList>
            <person name="Dean P.J."/>
            <person name="Siwiec T."/>
            <person name="Waterworth W.M."/>
            <person name="Schloegelhofer P."/>
            <person name="Armstrong S.J."/>
            <person name="West C.E."/>
        </authorList>
    </citation>
    <scope>NUCLEOTIDE SEQUENCE [MRNA] (ISOFORM 1)</scope>
    <scope>FUNCTION</scope>
    <scope>INDUCTION BY X-RAYS</scope>
    <scope>SUBCELLULAR LOCATION</scope>
    <scope>DISRUPTION PHENOTYPE</scope>
    <scope>INTERACTION WITH MIP1</scope>
</reference>
<reference key="2">
    <citation type="journal article" date="1998" name="DNA Res.">
        <title>Structural analysis of Arabidopsis thaliana chromosome 5. VI. Sequence features of the regions of 1,367,185 bp covered by 19 physically assigned P1 and TAC clones.</title>
        <authorList>
            <person name="Kotani H."/>
            <person name="Nakamura Y."/>
            <person name="Sato S."/>
            <person name="Asamizu E."/>
            <person name="Kaneko T."/>
            <person name="Miyajima N."/>
            <person name="Tabata S."/>
        </authorList>
    </citation>
    <scope>NUCLEOTIDE SEQUENCE [LARGE SCALE GENOMIC DNA]</scope>
    <source>
        <strain>cv. Columbia</strain>
    </source>
</reference>
<reference key="3">
    <citation type="journal article" date="2017" name="Plant J.">
        <title>Araport11: a complete reannotation of the Arabidopsis thaliana reference genome.</title>
        <authorList>
            <person name="Cheng C.Y."/>
            <person name="Krishnakumar V."/>
            <person name="Chan A.P."/>
            <person name="Thibaud-Nissen F."/>
            <person name="Schobel S."/>
            <person name="Town C.D."/>
        </authorList>
    </citation>
    <scope>GENOME REANNOTATION</scope>
    <source>
        <strain>cv. Columbia</strain>
    </source>
</reference>
<reference key="4">
    <citation type="submission" date="2005-02" db="EMBL/GenBank/DDBJ databases">
        <title>Arabidopsis ORF clones.</title>
        <authorList>
            <person name="Kim C.J."/>
            <person name="Chen H."/>
            <person name="Cheuk R.F."/>
            <person name="Shinn P."/>
            <person name="Ecker J.R."/>
        </authorList>
    </citation>
    <scope>NUCLEOTIDE SEQUENCE [LARGE SCALE MRNA] (ISOFORM 2)</scope>
    <source>
        <strain>cv. Columbia</strain>
    </source>
</reference>
<reference key="5">
    <citation type="journal article" date="2004" name="Biochem. Soc. Trans.">
        <title>Arabidopsis DNA double-strand break repair pathways.</title>
        <authorList>
            <person name="West C.E."/>
            <person name="Waterworth W.M."/>
            <person name="Sunderland P.A."/>
            <person name="Bray C.M."/>
        </authorList>
    </citation>
    <scope>INDUCTION BY BLEOMYCIN</scope>
</reference>
<feature type="chain" id="PRO_0000378327" description="Protein XRI1">
    <location>
        <begin position="1"/>
        <end position="300"/>
    </location>
</feature>
<feature type="splice variant" id="VSP_037542" description="In isoform 2." evidence="3">
    <location>
        <begin position="1"/>
        <end position="34"/>
    </location>
</feature>
<evidence type="ECO:0000269" key="1">
    <source>
    </source>
</evidence>
<evidence type="ECO:0000269" key="2">
    <source>
    </source>
</evidence>
<evidence type="ECO:0000303" key="3">
    <source ref="4"/>
</evidence>
<evidence type="ECO:0000305" key="4"/>
<proteinExistence type="evidence at protein level"/>
<organism>
    <name type="scientific">Arabidopsis thaliana</name>
    <name type="common">Mouse-ear cress</name>
    <dbReference type="NCBI Taxonomy" id="3702"/>
    <lineage>
        <taxon>Eukaryota</taxon>
        <taxon>Viridiplantae</taxon>
        <taxon>Streptophyta</taxon>
        <taxon>Embryophyta</taxon>
        <taxon>Tracheophyta</taxon>
        <taxon>Spermatophyta</taxon>
        <taxon>Magnoliopsida</taxon>
        <taxon>eudicotyledons</taxon>
        <taxon>Gunneridae</taxon>
        <taxon>Pentapetalae</taxon>
        <taxon>rosids</taxon>
        <taxon>malvids</taxon>
        <taxon>Brassicales</taxon>
        <taxon>Brassicaceae</taxon>
        <taxon>Camelineae</taxon>
        <taxon>Arabidopsis</taxon>
    </lineage>
</organism>
<keyword id="KW-0025">Alternative splicing</keyword>
<keyword id="KW-0469">Meiosis</keyword>
<keyword id="KW-0539">Nucleus</keyword>
<keyword id="KW-1185">Reference proteome</keyword>
<sequence>MDYGDDDRSSSWNWQVDNYNHQPQSHFSDVPDCTMTEVTLNQEDHSYMFDDENTPVKACSELGYHVTTEDTNRKMEVHSETRSALKRRRMLQFEDQPETSLFSSESFSAILKSSARDDTFDELLPEGSQLIEGFSEDASASSFEGLDLYAEEWYADCLNDAETPMLPDDLNFGSPDVQVDISEYLNVPPETETREVQRPVTRSSPNVIFKGRKSFSRPVSKLPSSIIYPFAFIKPCGVHGGMTLKDINQKIRNPPAKPKAHIEEPAVIQTSAFSGKPVVGKTKIRTEGGKGSITIMRTRG</sequence>